<keyword id="KW-0012">Acyltransferase</keyword>
<keyword id="KW-0028">Amino-acid biosynthesis</keyword>
<keyword id="KW-0055">Arginine biosynthesis</keyword>
<keyword id="KW-0963">Cytoplasm</keyword>
<keyword id="KW-0808">Transferase</keyword>
<gene>
    <name evidence="1" type="primary">argA</name>
    <name type="ordered locus">APP7_0740</name>
</gene>
<organism>
    <name type="scientific">Actinobacillus pleuropneumoniae serotype 7 (strain AP76)</name>
    <dbReference type="NCBI Taxonomy" id="537457"/>
    <lineage>
        <taxon>Bacteria</taxon>
        <taxon>Pseudomonadati</taxon>
        <taxon>Pseudomonadota</taxon>
        <taxon>Gammaproteobacteria</taxon>
        <taxon>Pasteurellales</taxon>
        <taxon>Pasteurellaceae</taxon>
        <taxon>Actinobacillus</taxon>
    </lineage>
</organism>
<reference key="1">
    <citation type="submission" date="2008-06" db="EMBL/GenBank/DDBJ databases">
        <title>Genome and proteome analysis of A. pleuropneumoniae serotype 7.</title>
        <authorList>
            <person name="Linke B."/>
            <person name="Buettner F."/>
            <person name="Martinez-Arias R."/>
            <person name="Goesmann A."/>
            <person name="Baltes N."/>
            <person name="Tegetmeyer H."/>
            <person name="Singh M."/>
            <person name="Gerlach G.F."/>
        </authorList>
    </citation>
    <scope>NUCLEOTIDE SEQUENCE [LARGE SCALE GENOMIC DNA]</scope>
    <source>
        <strain>AP76</strain>
    </source>
</reference>
<protein>
    <recommendedName>
        <fullName evidence="1">Amino-acid acetyltransferase</fullName>
        <ecNumber evidence="1">2.3.1.1</ecNumber>
    </recommendedName>
    <alternativeName>
        <fullName evidence="1">N-acetylglutamate synthase</fullName>
        <shortName evidence="1">AGS</shortName>
        <shortName evidence="1">NAGS</shortName>
    </alternativeName>
</protein>
<proteinExistence type="inferred from homology"/>
<accession>B3GXD3</accession>
<name>ARGA_ACTP7</name>
<comment type="catalytic activity">
    <reaction evidence="1">
        <text>L-glutamate + acetyl-CoA = N-acetyl-L-glutamate + CoA + H(+)</text>
        <dbReference type="Rhea" id="RHEA:24292"/>
        <dbReference type="ChEBI" id="CHEBI:15378"/>
        <dbReference type="ChEBI" id="CHEBI:29985"/>
        <dbReference type="ChEBI" id="CHEBI:44337"/>
        <dbReference type="ChEBI" id="CHEBI:57287"/>
        <dbReference type="ChEBI" id="CHEBI:57288"/>
        <dbReference type="EC" id="2.3.1.1"/>
    </reaction>
</comment>
<comment type="pathway">
    <text evidence="1">Amino-acid biosynthesis; L-arginine biosynthesis; N(2)-acetyl-L-ornithine from L-glutamate: step 1/4.</text>
</comment>
<comment type="subcellular location">
    <subcellularLocation>
        <location evidence="1">Cytoplasm</location>
    </subcellularLocation>
</comment>
<comment type="miscellaneous">
    <text>In bacteria which possess the bifunctional enzyme ornithine acetyltransferase/N-acetylglutamate synthase (ArgJ), ArgA fulfills an anaplerotic role.</text>
</comment>
<comment type="similarity">
    <text evidence="1">Belongs to the acetyltransferase family. ArgA subfamily.</text>
</comment>
<dbReference type="EC" id="2.3.1.1" evidence="1"/>
<dbReference type="EMBL" id="CP001091">
    <property type="protein sequence ID" value="ACE61392.1"/>
    <property type="molecule type" value="Genomic_DNA"/>
</dbReference>
<dbReference type="RefSeq" id="WP_005617196.1">
    <property type="nucleotide sequence ID" value="NC_010939.1"/>
</dbReference>
<dbReference type="SMR" id="B3GXD3"/>
<dbReference type="KEGG" id="apa:APP7_0740"/>
<dbReference type="HOGENOM" id="CLU_024773_0_0_6"/>
<dbReference type="UniPathway" id="UPA00068">
    <property type="reaction ID" value="UER00106"/>
</dbReference>
<dbReference type="Proteomes" id="UP000001226">
    <property type="component" value="Chromosome"/>
</dbReference>
<dbReference type="GO" id="GO:0005737">
    <property type="term" value="C:cytoplasm"/>
    <property type="evidence" value="ECO:0007669"/>
    <property type="project" value="UniProtKB-SubCell"/>
</dbReference>
<dbReference type="GO" id="GO:0004042">
    <property type="term" value="F:L-glutamate N-acetyltransferase activity"/>
    <property type="evidence" value="ECO:0007669"/>
    <property type="project" value="UniProtKB-UniRule"/>
</dbReference>
<dbReference type="GO" id="GO:0006526">
    <property type="term" value="P:L-arginine biosynthetic process"/>
    <property type="evidence" value="ECO:0007669"/>
    <property type="project" value="UniProtKB-UniRule"/>
</dbReference>
<dbReference type="CDD" id="cd04237">
    <property type="entry name" value="AAK_NAGS-ABP"/>
    <property type="match status" value="1"/>
</dbReference>
<dbReference type="CDD" id="cd04301">
    <property type="entry name" value="NAT_SF"/>
    <property type="match status" value="1"/>
</dbReference>
<dbReference type="Gene3D" id="3.40.630.30">
    <property type="match status" value="1"/>
</dbReference>
<dbReference type="Gene3D" id="3.40.1160.10">
    <property type="entry name" value="Acetylglutamate kinase-like"/>
    <property type="match status" value="1"/>
</dbReference>
<dbReference type="HAMAP" id="MF_01105">
    <property type="entry name" value="N_acetyl_glu_synth"/>
    <property type="match status" value="1"/>
</dbReference>
<dbReference type="InterPro" id="IPR036393">
    <property type="entry name" value="AceGlu_kinase-like_sf"/>
</dbReference>
<dbReference type="InterPro" id="IPR016181">
    <property type="entry name" value="Acyl_CoA_acyltransferase"/>
</dbReference>
<dbReference type="InterPro" id="IPR001048">
    <property type="entry name" value="Asp/Glu/Uridylate_kinase"/>
</dbReference>
<dbReference type="InterPro" id="IPR000182">
    <property type="entry name" value="GNAT_dom"/>
</dbReference>
<dbReference type="InterPro" id="IPR033719">
    <property type="entry name" value="NAGS_kin"/>
</dbReference>
<dbReference type="InterPro" id="IPR010167">
    <property type="entry name" value="NH2A_AcTrfase"/>
</dbReference>
<dbReference type="NCBIfam" id="TIGR01890">
    <property type="entry name" value="N-Ac-Glu-synth"/>
    <property type="match status" value="1"/>
</dbReference>
<dbReference type="NCBIfam" id="NF003641">
    <property type="entry name" value="PRK05279.1"/>
    <property type="match status" value="1"/>
</dbReference>
<dbReference type="PANTHER" id="PTHR30602">
    <property type="entry name" value="AMINO-ACID ACETYLTRANSFERASE"/>
    <property type="match status" value="1"/>
</dbReference>
<dbReference type="PANTHER" id="PTHR30602:SF12">
    <property type="entry name" value="AMINO-ACID ACETYLTRANSFERASE NAGS1, CHLOROPLASTIC-RELATED"/>
    <property type="match status" value="1"/>
</dbReference>
<dbReference type="Pfam" id="PF00696">
    <property type="entry name" value="AA_kinase"/>
    <property type="match status" value="1"/>
</dbReference>
<dbReference type="Pfam" id="PF00583">
    <property type="entry name" value="Acetyltransf_1"/>
    <property type="match status" value="1"/>
</dbReference>
<dbReference type="PIRSF" id="PIRSF000423">
    <property type="entry name" value="ArgA"/>
    <property type="match status" value="1"/>
</dbReference>
<dbReference type="SUPFAM" id="SSF55729">
    <property type="entry name" value="Acyl-CoA N-acyltransferases (Nat)"/>
    <property type="match status" value="1"/>
</dbReference>
<dbReference type="SUPFAM" id="SSF53633">
    <property type="entry name" value="Carbamate kinase-like"/>
    <property type="match status" value="1"/>
</dbReference>
<dbReference type="PROSITE" id="PS51186">
    <property type="entry name" value="GNAT"/>
    <property type="match status" value="1"/>
</dbReference>
<feature type="chain" id="PRO_1000137048" description="Amino-acid acetyltransferase">
    <location>
        <begin position="1"/>
        <end position="437"/>
    </location>
</feature>
<feature type="domain" description="N-acetyltransferase" evidence="1">
    <location>
        <begin position="289"/>
        <end position="429"/>
    </location>
</feature>
<evidence type="ECO:0000255" key="1">
    <source>
        <dbReference type="HAMAP-Rule" id="MF_01105"/>
    </source>
</evidence>
<sequence length="437" mass="49336">MRNTELVQWFRQSTPYVNMHREKTFVIMLDGNAIAHPNFINITNDISLLHSLGIKLVIVFGARCQIDELLAKNQMSSTYHKHIRITDSKTLEVVKQAVGGLHYDIFSRLSLRLPNSPVLNVVSSNAVLAQPLGVIDGVDYGLSGKIRRINIEAIQQQLAQDAIVVIGPIAPSVTGEMFNLPFEEIATQIAIKLKADKLIGFCDQQGILDSEGNVLSDLHPREAKRYLTQFIESGQYHHSAARFLQAAIEACHAGIKRSHLLSYKEDGSLLQELFSRDGIGTQLSEESSENIRLATSFDIPGLLNLIRPLEEQGILVKRSREQLEMEISNYTIIERDGIVIACAALNHYPQEKMAEMACVAVHPDYRDSSRGDVLLEAIKRRAYKLQVEKLFVLTTRTTQWFQERGFVLSTTDDLPKEKREHYNYQRMSKILILDLGQ</sequence>